<evidence type="ECO:0000255" key="1">
    <source>
        <dbReference type="HAMAP-Rule" id="MF_01364"/>
    </source>
</evidence>
<evidence type="ECO:0000305" key="2"/>
<name>RS14Z_BACCN</name>
<gene>
    <name evidence="1" type="primary">rpsZ</name>
    <name evidence="1" type="synonym">rpsN</name>
    <name type="ordered locus">Bcer98_0117</name>
</gene>
<organism>
    <name type="scientific">Bacillus cytotoxicus (strain DSM 22905 / CIP 110041 / 391-98 / NVH 391-98)</name>
    <dbReference type="NCBI Taxonomy" id="315749"/>
    <lineage>
        <taxon>Bacteria</taxon>
        <taxon>Bacillati</taxon>
        <taxon>Bacillota</taxon>
        <taxon>Bacilli</taxon>
        <taxon>Bacillales</taxon>
        <taxon>Bacillaceae</taxon>
        <taxon>Bacillus</taxon>
        <taxon>Bacillus cereus group</taxon>
    </lineage>
</organism>
<sequence>MAKKSMIAKQKRTPKFKVQEYTRCERCGRPHSVYRKFKLCRICFRELAYKGQIPGVKKASW</sequence>
<protein>
    <recommendedName>
        <fullName evidence="1">Small ribosomal subunit protein uS14</fullName>
    </recommendedName>
    <alternativeName>
        <fullName evidence="2">30S ribosomal protein S14 type Z</fullName>
    </alternativeName>
</protein>
<accession>A7GK33</accession>
<keyword id="KW-0479">Metal-binding</keyword>
<keyword id="KW-0687">Ribonucleoprotein</keyword>
<keyword id="KW-0689">Ribosomal protein</keyword>
<keyword id="KW-0694">RNA-binding</keyword>
<keyword id="KW-0699">rRNA-binding</keyword>
<keyword id="KW-0862">Zinc</keyword>
<feature type="chain" id="PRO_1000087010" description="Small ribosomal subunit protein uS14">
    <location>
        <begin position="1"/>
        <end position="61"/>
    </location>
</feature>
<feature type="binding site" evidence="1">
    <location>
        <position position="24"/>
    </location>
    <ligand>
        <name>Zn(2+)</name>
        <dbReference type="ChEBI" id="CHEBI:29105"/>
    </ligand>
</feature>
<feature type="binding site" evidence="1">
    <location>
        <position position="27"/>
    </location>
    <ligand>
        <name>Zn(2+)</name>
        <dbReference type="ChEBI" id="CHEBI:29105"/>
    </ligand>
</feature>
<feature type="binding site" evidence="1">
    <location>
        <position position="40"/>
    </location>
    <ligand>
        <name>Zn(2+)</name>
        <dbReference type="ChEBI" id="CHEBI:29105"/>
    </ligand>
</feature>
<feature type="binding site" evidence="1">
    <location>
        <position position="43"/>
    </location>
    <ligand>
        <name>Zn(2+)</name>
        <dbReference type="ChEBI" id="CHEBI:29105"/>
    </ligand>
</feature>
<reference key="1">
    <citation type="journal article" date="2008" name="Chem. Biol. Interact.">
        <title>Extending the Bacillus cereus group genomics to putative food-borne pathogens of different toxicity.</title>
        <authorList>
            <person name="Lapidus A."/>
            <person name="Goltsman E."/>
            <person name="Auger S."/>
            <person name="Galleron N."/>
            <person name="Segurens B."/>
            <person name="Dossat C."/>
            <person name="Land M.L."/>
            <person name="Broussolle V."/>
            <person name="Brillard J."/>
            <person name="Guinebretiere M.-H."/>
            <person name="Sanchis V."/>
            <person name="Nguen-the C."/>
            <person name="Lereclus D."/>
            <person name="Richardson P."/>
            <person name="Wincker P."/>
            <person name="Weissenbach J."/>
            <person name="Ehrlich S.D."/>
            <person name="Sorokin A."/>
        </authorList>
    </citation>
    <scope>NUCLEOTIDE SEQUENCE [LARGE SCALE GENOMIC DNA]</scope>
    <source>
        <strain>DSM 22905 / CIP 110041 / 391-98 / NVH 391-98</strain>
    </source>
</reference>
<comment type="function">
    <text evidence="1">Binds 16S rRNA, required for the assembly of 30S particles and may also be responsible for determining the conformation of the 16S rRNA at the A site.</text>
</comment>
<comment type="cofactor">
    <cofactor evidence="1">
        <name>Zn(2+)</name>
        <dbReference type="ChEBI" id="CHEBI:29105"/>
    </cofactor>
    <text evidence="1">Binds 1 zinc ion per subunit.</text>
</comment>
<comment type="subunit">
    <text evidence="1">Part of the 30S ribosomal subunit. Contacts proteins S3 and S10.</text>
</comment>
<comment type="similarity">
    <text evidence="1">Belongs to the universal ribosomal protein uS14 family. Zinc-binding uS14 subfamily.</text>
</comment>
<proteinExistence type="inferred from homology"/>
<dbReference type="EMBL" id="CP000764">
    <property type="protein sequence ID" value="ABS20491.1"/>
    <property type="molecule type" value="Genomic_DNA"/>
</dbReference>
<dbReference type="RefSeq" id="WP_001085700.1">
    <property type="nucleotide sequence ID" value="NC_009674.1"/>
</dbReference>
<dbReference type="SMR" id="A7GK33"/>
<dbReference type="STRING" id="315749.Bcer98_0117"/>
<dbReference type="GeneID" id="93010930"/>
<dbReference type="KEGG" id="bcy:Bcer98_0117"/>
<dbReference type="eggNOG" id="COG0199">
    <property type="taxonomic scope" value="Bacteria"/>
</dbReference>
<dbReference type="HOGENOM" id="CLU_139869_3_0_9"/>
<dbReference type="OrthoDB" id="9810484at2"/>
<dbReference type="Proteomes" id="UP000002300">
    <property type="component" value="Chromosome"/>
</dbReference>
<dbReference type="GO" id="GO:0015935">
    <property type="term" value="C:small ribosomal subunit"/>
    <property type="evidence" value="ECO:0007669"/>
    <property type="project" value="TreeGrafter"/>
</dbReference>
<dbReference type="GO" id="GO:0019843">
    <property type="term" value="F:rRNA binding"/>
    <property type="evidence" value="ECO:0007669"/>
    <property type="project" value="UniProtKB-UniRule"/>
</dbReference>
<dbReference type="GO" id="GO:0003735">
    <property type="term" value="F:structural constituent of ribosome"/>
    <property type="evidence" value="ECO:0007669"/>
    <property type="project" value="InterPro"/>
</dbReference>
<dbReference type="GO" id="GO:0008270">
    <property type="term" value="F:zinc ion binding"/>
    <property type="evidence" value="ECO:0007669"/>
    <property type="project" value="UniProtKB-UniRule"/>
</dbReference>
<dbReference type="GO" id="GO:0006412">
    <property type="term" value="P:translation"/>
    <property type="evidence" value="ECO:0007669"/>
    <property type="project" value="UniProtKB-UniRule"/>
</dbReference>
<dbReference type="FunFam" id="4.10.830.10:FF:000001">
    <property type="entry name" value="30S ribosomal protein S14 type Z"/>
    <property type="match status" value="1"/>
</dbReference>
<dbReference type="Gene3D" id="4.10.830.10">
    <property type="entry name" value="30s Ribosomal Protein S14, Chain N"/>
    <property type="match status" value="1"/>
</dbReference>
<dbReference type="HAMAP" id="MF_01364_B">
    <property type="entry name" value="Ribosomal_uS14_2_B"/>
    <property type="match status" value="1"/>
</dbReference>
<dbReference type="InterPro" id="IPR001209">
    <property type="entry name" value="Ribosomal_uS14"/>
</dbReference>
<dbReference type="InterPro" id="IPR023053">
    <property type="entry name" value="Ribosomal_uS14_bact"/>
</dbReference>
<dbReference type="InterPro" id="IPR018271">
    <property type="entry name" value="Ribosomal_uS14_CS"/>
</dbReference>
<dbReference type="InterPro" id="IPR043140">
    <property type="entry name" value="Ribosomal_uS14_sf"/>
</dbReference>
<dbReference type="NCBIfam" id="NF005974">
    <property type="entry name" value="PRK08061.1"/>
    <property type="match status" value="1"/>
</dbReference>
<dbReference type="PANTHER" id="PTHR19836">
    <property type="entry name" value="30S RIBOSOMAL PROTEIN S14"/>
    <property type="match status" value="1"/>
</dbReference>
<dbReference type="PANTHER" id="PTHR19836:SF26">
    <property type="entry name" value="SMALL RIBOSOMAL SUBUNIT PROTEIN US14B"/>
    <property type="match status" value="1"/>
</dbReference>
<dbReference type="Pfam" id="PF00253">
    <property type="entry name" value="Ribosomal_S14"/>
    <property type="match status" value="1"/>
</dbReference>
<dbReference type="SUPFAM" id="SSF57716">
    <property type="entry name" value="Glucocorticoid receptor-like (DNA-binding domain)"/>
    <property type="match status" value="1"/>
</dbReference>
<dbReference type="PROSITE" id="PS00527">
    <property type="entry name" value="RIBOSOMAL_S14"/>
    <property type="match status" value="1"/>
</dbReference>